<protein>
    <recommendedName>
        <fullName evidence="1">Urease subunit alpha</fullName>
        <ecNumber evidence="1">3.5.1.5</ecNumber>
    </recommendedName>
    <alternativeName>
        <fullName evidence="1">Urea amidohydrolase subunit alpha</fullName>
    </alternativeName>
</protein>
<name>URE1_BURCJ</name>
<sequence length="568" mass="60972">MTLRLSRRAYAEMFGPTTGDRVRLADTELLIEIERDFTTYGEEVKFGGGKVIRDGMGQSQRVAADVPDTVITNAVILDHWGIVKADIAIKHGRIAAIGKAGNPDIQPGVTIAIGAATEVIAGEGLIVTAGGIDTHIHFISPQQIDEALASGVTTMLGGGTGPATGTNATTCTPGPWHMERMLQAADGWPINLGFLGKGNASLPQPLVEQIAAGAIGLKLHEDWGTTPAAIDNCLSVADDTDTQVAIHTDTLNEAGFVESTVAAFKGRTIHTYHTEGAGGGHAPDILKVCGEMNVLPSSTNPTRPYTINTLDEHLDMLMVCHHLDPSIAEDLAFAESRIRRETIAAEDILHDLGALSMLSSDSQAMGRVGEVIIRTWQTAHKMKVQRGALPEDTARNDNFRAKRYVAKYTINPALTHGIAHEVGSIEPGKWADLVLWEPAFFGIKPSMILKGGMIALAQMGDPNASIPTPQPVHYREMFATRGGALARTSLTFVSQMAADAGIAERYGLAKRIVPVRNCRNVTKADMIHNAWRPSISVDPETYDVIADGQLLTCEPATVLPMAQRYFLF</sequence>
<accession>B4ECC7</accession>
<organism>
    <name type="scientific">Burkholderia cenocepacia (strain ATCC BAA-245 / DSM 16553 / LMG 16656 / NCTC 13227 / J2315 / CF5610)</name>
    <name type="common">Burkholderia cepacia (strain J2315)</name>
    <dbReference type="NCBI Taxonomy" id="216591"/>
    <lineage>
        <taxon>Bacteria</taxon>
        <taxon>Pseudomonadati</taxon>
        <taxon>Pseudomonadota</taxon>
        <taxon>Betaproteobacteria</taxon>
        <taxon>Burkholderiales</taxon>
        <taxon>Burkholderiaceae</taxon>
        <taxon>Burkholderia</taxon>
        <taxon>Burkholderia cepacia complex</taxon>
    </lineage>
</organism>
<dbReference type="EC" id="3.5.1.5" evidence="1"/>
<dbReference type="EMBL" id="AM747720">
    <property type="protein sequence ID" value="CAR53430.1"/>
    <property type="molecule type" value="Genomic_DNA"/>
</dbReference>
<dbReference type="RefSeq" id="WP_006491061.1">
    <property type="nucleotide sequence ID" value="NC_011000.1"/>
</dbReference>
<dbReference type="SMR" id="B4ECC7"/>
<dbReference type="MEROPS" id="M38.982"/>
<dbReference type="GeneID" id="56557343"/>
<dbReference type="KEGG" id="bcj:BCAL3106"/>
<dbReference type="eggNOG" id="COG0804">
    <property type="taxonomic scope" value="Bacteria"/>
</dbReference>
<dbReference type="HOGENOM" id="CLU_000980_0_0_4"/>
<dbReference type="BioCyc" id="BCEN216591:G1G1V-3446-MONOMER"/>
<dbReference type="UniPathway" id="UPA00258">
    <property type="reaction ID" value="UER00370"/>
</dbReference>
<dbReference type="Proteomes" id="UP000001035">
    <property type="component" value="Chromosome 1"/>
</dbReference>
<dbReference type="GO" id="GO:0005737">
    <property type="term" value="C:cytoplasm"/>
    <property type="evidence" value="ECO:0007669"/>
    <property type="project" value="UniProtKB-SubCell"/>
</dbReference>
<dbReference type="GO" id="GO:0016151">
    <property type="term" value="F:nickel cation binding"/>
    <property type="evidence" value="ECO:0007669"/>
    <property type="project" value="UniProtKB-UniRule"/>
</dbReference>
<dbReference type="GO" id="GO:0009039">
    <property type="term" value="F:urease activity"/>
    <property type="evidence" value="ECO:0007669"/>
    <property type="project" value="UniProtKB-UniRule"/>
</dbReference>
<dbReference type="GO" id="GO:0043419">
    <property type="term" value="P:urea catabolic process"/>
    <property type="evidence" value="ECO:0007669"/>
    <property type="project" value="UniProtKB-UniRule"/>
</dbReference>
<dbReference type="CDD" id="cd00375">
    <property type="entry name" value="Urease_alpha"/>
    <property type="match status" value="1"/>
</dbReference>
<dbReference type="Gene3D" id="3.20.20.140">
    <property type="entry name" value="Metal-dependent hydrolases"/>
    <property type="match status" value="1"/>
</dbReference>
<dbReference type="Gene3D" id="2.30.40.10">
    <property type="entry name" value="Urease, subunit C, domain 1"/>
    <property type="match status" value="1"/>
</dbReference>
<dbReference type="HAMAP" id="MF_01953">
    <property type="entry name" value="Urease_alpha"/>
    <property type="match status" value="1"/>
</dbReference>
<dbReference type="InterPro" id="IPR006680">
    <property type="entry name" value="Amidohydro-rel"/>
</dbReference>
<dbReference type="InterPro" id="IPR011059">
    <property type="entry name" value="Metal-dep_hydrolase_composite"/>
</dbReference>
<dbReference type="InterPro" id="IPR032466">
    <property type="entry name" value="Metal_Hydrolase"/>
</dbReference>
<dbReference type="InterPro" id="IPR011612">
    <property type="entry name" value="Urease_alpha_N_dom"/>
</dbReference>
<dbReference type="InterPro" id="IPR050112">
    <property type="entry name" value="Urease_alpha_subunit"/>
</dbReference>
<dbReference type="InterPro" id="IPR017950">
    <property type="entry name" value="Urease_AS"/>
</dbReference>
<dbReference type="InterPro" id="IPR005848">
    <property type="entry name" value="Urease_asu"/>
</dbReference>
<dbReference type="InterPro" id="IPR017951">
    <property type="entry name" value="Urease_asu_c"/>
</dbReference>
<dbReference type="InterPro" id="IPR029754">
    <property type="entry name" value="Urease_Ni-bd"/>
</dbReference>
<dbReference type="NCBIfam" id="NF009685">
    <property type="entry name" value="PRK13206.1"/>
    <property type="match status" value="1"/>
</dbReference>
<dbReference type="NCBIfam" id="NF009686">
    <property type="entry name" value="PRK13207.1"/>
    <property type="match status" value="1"/>
</dbReference>
<dbReference type="NCBIfam" id="TIGR01792">
    <property type="entry name" value="urease_alph"/>
    <property type="match status" value="1"/>
</dbReference>
<dbReference type="PANTHER" id="PTHR43440">
    <property type="entry name" value="UREASE"/>
    <property type="match status" value="1"/>
</dbReference>
<dbReference type="PANTHER" id="PTHR43440:SF1">
    <property type="entry name" value="UREASE"/>
    <property type="match status" value="1"/>
</dbReference>
<dbReference type="Pfam" id="PF01979">
    <property type="entry name" value="Amidohydro_1"/>
    <property type="match status" value="1"/>
</dbReference>
<dbReference type="Pfam" id="PF00449">
    <property type="entry name" value="Urease_alpha"/>
    <property type="match status" value="1"/>
</dbReference>
<dbReference type="PRINTS" id="PR01752">
    <property type="entry name" value="UREASE"/>
</dbReference>
<dbReference type="SUPFAM" id="SSF51338">
    <property type="entry name" value="Composite domain of metallo-dependent hydrolases"/>
    <property type="match status" value="2"/>
</dbReference>
<dbReference type="SUPFAM" id="SSF51556">
    <property type="entry name" value="Metallo-dependent hydrolases"/>
    <property type="match status" value="1"/>
</dbReference>
<dbReference type="PROSITE" id="PS01120">
    <property type="entry name" value="UREASE_1"/>
    <property type="match status" value="1"/>
</dbReference>
<dbReference type="PROSITE" id="PS00145">
    <property type="entry name" value="UREASE_2"/>
    <property type="match status" value="1"/>
</dbReference>
<dbReference type="PROSITE" id="PS51368">
    <property type="entry name" value="UREASE_3"/>
    <property type="match status" value="1"/>
</dbReference>
<proteinExistence type="inferred from homology"/>
<evidence type="ECO:0000255" key="1">
    <source>
        <dbReference type="HAMAP-Rule" id="MF_01953"/>
    </source>
</evidence>
<keyword id="KW-0963">Cytoplasm</keyword>
<keyword id="KW-0378">Hydrolase</keyword>
<keyword id="KW-0479">Metal-binding</keyword>
<keyword id="KW-0533">Nickel</keyword>
<gene>
    <name evidence="1" type="primary">ureC</name>
    <name type="ordered locus">BceJ2315_30530</name>
    <name type="ORF">BCAL3106</name>
</gene>
<reference key="1">
    <citation type="journal article" date="2009" name="J. Bacteriol.">
        <title>The genome of Burkholderia cenocepacia J2315, an epidemic pathogen of cystic fibrosis patients.</title>
        <authorList>
            <person name="Holden M.T."/>
            <person name="Seth-Smith H.M."/>
            <person name="Crossman L.C."/>
            <person name="Sebaihia M."/>
            <person name="Bentley S.D."/>
            <person name="Cerdeno-Tarraga A.M."/>
            <person name="Thomson N.R."/>
            <person name="Bason N."/>
            <person name="Quail M.A."/>
            <person name="Sharp S."/>
            <person name="Cherevach I."/>
            <person name="Churcher C."/>
            <person name="Goodhead I."/>
            <person name="Hauser H."/>
            <person name="Holroyd N."/>
            <person name="Mungall K."/>
            <person name="Scott P."/>
            <person name="Walker D."/>
            <person name="White B."/>
            <person name="Rose H."/>
            <person name="Iversen P."/>
            <person name="Mil-Homens D."/>
            <person name="Rocha E.P."/>
            <person name="Fialho A.M."/>
            <person name="Baldwin A."/>
            <person name="Dowson C."/>
            <person name="Barrell B.G."/>
            <person name="Govan J.R."/>
            <person name="Vandamme P."/>
            <person name="Hart C.A."/>
            <person name="Mahenthiralingam E."/>
            <person name="Parkhill J."/>
        </authorList>
    </citation>
    <scope>NUCLEOTIDE SEQUENCE [LARGE SCALE GENOMIC DNA]</scope>
    <source>
        <strain>ATCC BAA-245 / DSM 16553 / LMG 16656 / NCTC 13227 / J2315 / CF5610</strain>
    </source>
</reference>
<comment type="catalytic activity">
    <reaction evidence="1">
        <text>urea + 2 H2O + H(+) = hydrogencarbonate + 2 NH4(+)</text>
        <dbReference type="Rhea" id="RHEA:20557"/>
        <dbReference type="ChEBI" id="CHEBI:15377"/>
        <dbReference type="ChEBI" id="CHEBI:15378"/>
        <dbReference type="ChEBI" id="CHEBI:16199"/>
        <dbReference type="ChEBI" id="CHEBI:17544"/>
        <dbReference type="ChEBI" id="CHEBI:28938"/>
        <dbReference type="EC" id="3.5.1.5"/>
    </reaction>
</comment>
<comment type="cofactor">
    <cofactor evidence="1">
        <name>Ni cation</name>
        <dbReference type="ChEBI" id="CHEBI:25516"/>
    </cofactor>
    <text evidence="1">Binds 2 nickel ions per subunit.</text>
</comment>
<comment type="pathway">
    <text evidence="1">Nitrogen metabolism; urea degradation; CO(2) and NH(3) from urea (urease route): step 1/1.</text>
</comment>
<comment type="subunit">
    <text evidence="1">Heterotrimer of UreA (gamma), UreB (beta) and UreC (alpha) subunits. Three heterotrimers associate to form the active enzyme.</text>
</comment>
<comment type="subcellular location">
    <subcellularLocation>
        <location evidence="1">Cytoplasm</location>
    </subcellularLocation>
</comment>
<comment type="PTM">
    <text evidence="1">Carboxylation allows a single lysine to coordinate two nickel ions.</text>
</comment>
<comment type="similarity">
    <text evidence="1">Belongs to the metallo-dependent hydrolases superfamily. Urease alpha subunit family.</text>
</comment>
<feature type="chain" id="PRO_1000188866" description="Urease subunit alpha">
    <location>
        <begin position="1"/>
        <end position="568"/>
    </location>
</feature>
<feature type="domain" description="Urease" evidence="1">
    <location>
        <begin position="130"/>
        <end position="568"/>
    </location>
</feature>
<feature type="active site" description="Proton donor" evidence="1">
    <location>
        <position position="321"/>
    </location>
</feature>
<feature type="binding site" evidence="1">
    <location>
        <position position="135"/>
    </location>
    <ligand>
        <name>Ni(2+)</name>
        <dbReference type="ChEBI" id="CHEBI:49786"/>
        <label>1</label>
    </ligand>
</feature>
<feature type="binding site" evidence="1">
    <location>
        <position position="137"/>
    </location>
    <ligand>
        <name>Ni(2+)</name>
        <dbReference type="ChEBI" id="CHEBI:49786"/>
        <label>1</label>
    </ligand>
</feature>
<feature type="binding site" description="via carbamate group" evidence="1">
    <location>
        <position position="218"/>
    </location>
    <ligand>
        <name>Ni(2+)</name>
        <dbReference type="ChEBI" id="CHEBI:49786"/>
        <label>1</label>
    </ligand>
</feature>
<feature type="binding site" description="via carbamate group" evidence="1">
    <location>
        <position position="218"/>
    </location>
    <ligand>
        <name>Ni(2+)</name>
        <dbReference type="ChEBI" id="CHEBI:49786"/>
        <label>2</label>
    </ligand>
</feature>
<feature type="binding site" evidence="1">
    <location>
        <position position="220"/>
    </location>
    <ligand>
        <name>substrate</name>
    </ligand>
</feature>
<feature type="binding site" evidence="1">
    <location>
        <position position="247"/>
    </location>
    <ligand>
        <name>Ni(2+)</name>
        <dbReference type="ChEBI" id="CHEBI:49786"/>
        <label>2</label>
    </ligand>
</feature>
<feature type="binding site" evidence="1">
    <location>
        <position position="273"/>
    </location>
    <ligand>
        <name>Ni(2+)</name>
        <dbReference type="ChEBI" id="CHEBI:49786"/>
        <label>2</label>
    </ligand>
</feature>
<feature type="binding site" evidence="1">
    <location>
        <position position="361"/>
    </location>
    <ligand>
        <name>Ni(2+)</name>
        <dbReference type="ChEBI" id="CHEBI:49786"/>
        <label>1</label>
    </ligand>
</feature>
<feature type="modified residue" description="N6-carboxylysine" evidence="1">
    <location>
        <position position="218"/>
    </location>
</feature>